<keyword id="KW-0687">Ribonucleoprotein</keyword>
<keyword id="KW-0689">Ribosomal protein</keyword>
<dbReference type="EMBL" id="CP000886">
    <property type="protein sequence ID" value="ABX69493.1"/>
    <property type="molecule type" value="Genomic_DNA"/>
</dbReference>
<dbReference type="RefSeq" id="WP_000847559.1">
    <property type="nucleotide sequence ID" value="NC_010102.1"/>
</dbReference>
<dbReference type="SMR" id="A9N840"/>
<dbReference type="GeneID" id="89518067"/>
<dbReference type="KEGG" id="spq:SPAB_04170"/>
<dbReference type="PATRIC" id="fig|1016998.12.peg.3926"/>
<dbReference type="HOGENOM" id="CLU_082184_2_2_6"/>
<dbReference type="BioCyc" id="SENT1016998:SPAB_RS16950-MONOMER"/>
<dbReference type="Proteomes" id="UP000008556">
    <property type="component" value="Chromosome"/>
</dbReference>
<dbReference type="GO" id="GO:0022625">
    <property type="term" value="C:cytosolic large ribosomal subunit"/>
    <property type="evidence" value="ECO:0007669"/>
    <property type="project" value="TreeGrafter"/>
</dbReference>
<dbReference type="GO" id="GO:0003729">
    <property type="term" value="F:mRNA binding"/>
    <property type="evidence" value="ECO:0007669"/>
    <property type="project" value="TreeGrafter"/>
</dbReference>
<dbReference type="GO" id="GO:0003735">
    <property type="term" value="F:structural constituent of ribosome"/>
    <property type="evidence" value="ECO:0007669"/>
    <property type="project" value="InterPro"/>
</dbReference>
<dbReference type="GO" id="GO:0017148">
    <property type="term" value="P:negative regulation of translation"/>
    <property type="evidence" value="ECO:0007669"/>
    <property type="project" value="TreeGrafter"/>
</dbReference>
<dbReference type="GO" id="GO:0006412">
    <property type="term" value="P:translation"/>
    <property type="evidence" value="ECO:0007669"/>
    <property type="project" value="UniProtKB-UniRule"/>
</dbReference>
<dbReference type="CDD" id="cd00392">
    <property type="entry name" value="Ribosomal_L13"/>
    <property type="match status" value="1"/>
</dbReference>
<dbReference type="FunFam" id="3.90.1180.10:FF:000001">
    <property type="entry name" value="50S ribosomal protein L13"/>
    <property type="match status" value="1"/>
</dbReference>
<dbReference type="Gene3D" id="3.90.1180.10">
    <property type="entry name" value="Ribosomal protein L13"/>
    <property type="match status" value="1"/>
</dbReference>
<dbReference type="HAMAP" id="MF_01366">
    <property type="entry name" value="Ribosomal_uL13"/>
    <property type="match status" value="1"/>
</dbReference>
<dbReference type="InterPro" id="IPR005822">
    <property type="entry name" value="Ribosomal_uL13"/>
</dbReference>
<dbReference type="InterPro" id="IPR005823">
    <property type="entry name" value="Ribosomal_uL13_bac-type"/>
</dbReference>
<dbReference type="InterPro" id="IPR023563">
    <property type="entry name" value="Ribosomal_uL13_CS"/>
</dbReference>
<dbReference type="InterPro" id="IPR036899">
    <property type="entry name" value="Ribosomal_uL13_sf"/>
</dbReference>
<dbReference type="NCBIfam" id="TIGR01066">
    <property type="entry name" value="rplM_bact"/>
    <property type="match status" value="1"/>
</dbReference>
<dbReference type="PANTHER" id="PTHR11545:SF2">
    <property type="entry name" value="LARGE RIBOSOMAL SUBUNIT PROTEIN UL13M"/>
    <property type="match status" value="1"/>
</dbReference>
<dbReference type="PANTHER" id="PTHR11545">
    <property type="entry name" value="RIBOSOMAL PROTEIN L13"/>
    <property type="match status" value="1"/>
</dbReference>
<dbReference type="Pfam" id="PF00572">
    <property type="entry name" value="Ribosomal_L13"/>
    <property type="match status" value="1"/>
</dbReference>
<dbReference type="PIRSF" id="PIRSF002181">
    <property type="entry name" value="Ribosomal_L13"/>
    <property type="match status" value="1"/>
</dbReference>
<dbReference type="SUPFAM" id="SSF52161">
    <property type="entry name" value="Ribosomal protein L13"/>
    <property type="match status" value="1"/>
</dbReference>
<dbReference type="PROSITE" id="PS00783">
    <property type="entry name" value="RIBOSOMAL_L13"/>
    <property type="match status" value="1"/>
</dbReference>
<accession>A9N840</accession>
<gene>
    <name evidence="1" type="primary">rplM</name>
    <name type="ordered locus">SPAB_04170</name>
</gene>
<organism>
    <name type="scientific">Salmonella paratyphi B (strain ATCC BAA-1250 / SPB7)</name>
    <dbReference type="NCBI Taxonomy" id="1016998"/>
    <lineage>
        <taxon>Bacteria</taxon>
        <taxon>Pseudomonadati</taxon>
        <taxon>Pseudomonadota</taxon>
        <taxon>Gammaproteobacteria</taxon>
        <taxon>Enterobacterales</taxon>
        <taxon>Enterobacteriaceae</taxon>
        <taxon>Salmonella</taxon>
    </lineage>
</organism>
<feature type="chain" id="PRO_1000087105" description="Large ribosomal subunit protein uL13">
    <location>
        <begin position="1"/>
        <end position="142"/>
    </location>
</feature>
<proteinExistence type="inferred from homology"/>
<name>RL13_SALPB</name>
<evidence type="ECO:0000255" key="1">
    <source>
        <dbReference type="HAMAP-Rule" id="MF_01366"/>
    </source>
</evidence>
<evidence type="ECO:0000305" key="2"/>
<sequence>MKTFTAKPETVKRDWYVVDATGKTLGRLATELARRLRGKHKAEYTPHVDTGDYIIVLNADKVAVTGNKRTDKVYYHHTGHIGGIKQATFEEMIARRPERVIEIAVKGMLPKGPLGRAMFRKLKVYAGNEHNHAAQQPQVLDI</sequence>
<reference key="1">
    <citation type="submission" date="2007-11" db="EMBL/GenBank/DDBJ databases">
        <authorList>
            <consortium name="The Salmonella enterica serovar Paratyphi B Genome Sequencing Project"/>
            <person name="McClelland M."/>
            <person name="Sanderson E.K."/>
            <person name="Porwollik S."/>
            <person name="Spieth J."/>
            <person name="Clifton W.S."/>
            <person name="Fulton R."/>
            <person name="Cordes M."/>
            <person name="Wollam A."/>
            <person name="Shah N."/>
            <person name="Pepin K."/>
            <person name="Bhonagiri V."/>
            <person name="Nash W."/>
            <person name="Johnson M."/>
            <person name="Thiruvilangam P."/>
            <person name="Wilson R."/>
        </authorList>
    </citation>
    <scope>NUCLEOTIDE SEQUENCE [LARGE SCALE GENOMIC DNA]</scope>
    <source>
        <strain>ATCC BAA-1250 / SPB7</strain>
    </source>
</reference>
<protein>
    <recommendedName>
        <fullName evidence="1">Large ribosomal subunit protein uL13</fullName>
    </recommendedName>
    <alternativeName>
        <fullName evidence="2">50S ribosomal protein L13</fullName>
    </alternativeName>
</protein>
<comment type="function">
    <text evidence="1">This protein is one of the early assembly proteins of the 50S ribosomal subunit, although it is not seen to bind rRNA by itself. It is important during the early stages of 50S assembly.</text>
</comment>
<comment type="subunit">
    <text evidence="1">Part of the 50S ribosomal subunit.</text>
</comment>
<comment type="similarity">
    <text evidence="1">Belongs to the universal ribosomal protein uL13 family.</text>
</comment>